<accession>A8LL57</accession>
<protein>
    <recommendedName>
        <fullName evidence="1">4-diphosphocytidyl-2-C-methyl-D-erythritol kinase</fullName>
        <shortName evidence="1">CMK</shortName>
        <ecNumber evidence="1">2.7.1.148</ecNumber>
    </recommendedName>
    <alternativeName>
        <fullName evidence="1">4-(cytidine-5'-diphospho)-2-C-methyl-D-erythritol kinase</fullName>
    </alternativeName>
</protein>
<feature type="chain" id="PRO_0000335712" description="4-diphosphocytidyl-2-C-methyl-D-erythritol kinase">
    <location>
        <begin position="1"/>
        <end position="287"/>
    </location>
</feature>
<feature type="active site" evidence="1">
    <location>
        <position position="22"/>
    </location>
</feature>
<feature type="active site" evidence="1">
    <location>
        <position position="139"/>
    </location>
</feature>
<feature type="binding site" evidence="1">
    <location>
        <begin position="102"/>
        <end position="112"/>
    </location>
    <ligand>
        <name>ATP</name>
        <dbReference type="ChEBI" id="CHEBI:30616"/>
    </ligand>
</feature>
<proteinExistence type="inferred from homology"/>
<dbReference type="EC" id="2.7.1.148" evidence="1"/>
<dbReference type="EMBL" id="CP000830">
    <property type="protein sequence ID" value="ABV94806.1"/>
    <property type="molecule type" value="Genomic_DNA"/>
</dbReference>
<dbReference type="RefSeq" id="WP_012179734.1">
    <property type="nucleotide sequence ID" value="NC_009952.1"/>
</dbReference>
<dbReference type="SMR" id="A8LL57"/>
<dbReference type="STRING" id="398580.Dshi_3073"/>
<dbReference type="KEGG" id="dsh:Dshi_3073"/>
<dbReference type="eggNOG" id="COG1947">
    <property type="taxonomic scope" value="Bacteria"/>
</dbReference>
<dbReference type="HOGENOM" id="CLU_053057_1_0_5"/>
<dbReference type="OrthoDB" id="9809438at2"/>
<dbReference type="UniPathway" id="UPA00056">
    <property type="reaction ID" value="UER00094"/>
</dbReference>
<dbReference type="Proteomes" id="UP000006833">
    <property type="component" value="Chromosome"/>
</dbReference>
<dbReference type="GO" id="GO:0050515">
    <property type="term" value="F:4-(cytidine 5'-diphospho)-2-C-methyl-D-erythritol kinase activity"/>
    <property type="evidence" value="ECO:0007669"/>
    <property type="project" value="UniProtKB-UniRule"/>
</dbReference>
<dbReference type="GO" id="GO:0005524">
    <property type="term" value="F:ATP binding"/>
    <property type="evidence" value="ECO:0007669"/>
    <property type="project" value="UniProtKB-UniRule"/>
</dbReference>
<dbReference type="GO" id="GO:0019288">
    <property type="term" value="P:isopentenyl diphosphate biosynthetic process, methylerythritol 4-phosphate pathway"/>
    <property type="evidence" value="ECO:0007669"/>
    <property type="project" value="UniProtKB-UniRule"/>
</dbReference>
<dbReference type="GO" id="GO:0016114">
    <property type="term" value="P:terpenoid biosynthetic process"/>
    <property type="evidence" value="ECO:0007669"/>
    <property type="project" value="InterPro"/>
</dbReference>
<dbReference type="Gene3D" id="3.30.230.10">
    <property type="match status" value="1"/>
</dbReference>
<dbReference type="Gene3D" id="3.30.70.890">
    <property type="entry name" value="GHMP kinase, C-terminal domain"/>
    <property type="match status" value="1"/>
</dbReference>
<dbReference type="HAMAP" id="MF_00061">
    <property type="entry name" value="IspE"/>
    <property type="match status" value="1"/>
</dbReference>
<dbReference type="InterPro" id="IPR013750">
    <property type="entry name" value="GHMP_kinase_C_dom"/>
</dbReference>
<dbReference type="InterPro" id="IPR036554">
    <property type="entry name" value="GHMP_kinase_C_sf"/>
</dbReference>
<dbReference type="InterPro" id="IPR006204">
    <property type="entry name" value="GHMP_kinase_N_dom"/>
</dbReference>
<dbReference type="InterPro" id="IPR004424">
    <property type="entry name" value="IspE"/>
</dbReference>
<dbReference type="InterPro" id="IPR020568">
    <property type="entry name" value="Ribosomal_Su5_D2-typ_SF"/>
</dbReference>
<dbReference type="InterPro" id="IPR014721">
    <property type="entry name" value="Ribsml_uS5_D2-typ_fold_subgr"/>
</dbReference>
<dbReference type="NCBIfam" id="NF011202">
    <property type="entry name" value="PRK14608.1"/>
    <property type="match status" value="1"/>
</dbReference>
<dbReference type="PANTHER" id="PTHR43527">
    <property type="entry name" value="4-DIPHOSPHOCYTIDYL-2-C-METHYL-D-ERYTHRITOL KINASE, CHLOROPLASTIC"/>
    <property type="match status" value="1"/>
</dbReference>
<dbReference type="PANTHER" id="PTHR43527:SF2">
    <property type="entry name" value="4-DIPHOSPHOCYTIDYL-2-C-METHYL-D-ERYTHRITOL KINASE, CHLOROPLASTIC"/>
    <property type="match status" value="1"/>
</dbReference>
<dbReference type="Pfam" id="PF08544">
    <property type="entry name" value="GHMP_kinases_C"/>
    <property type="match status" value="1"/>
</dbReference>
<dbReference type="Pfam" id="PF00288">
    <property type="entry name" value="GHMP_kinases_N"/>
    <property type="match status" value="1"/>
</dbReference>
<dbReference type="PIRSF" id="PIRSF010376">
    <property type="entry name" value="IspE"/>
    <property type="match status" value="1"/>
</dbReference>
<dbReference type="SUPFAM" id="SSF55060">
    <property type="entry name" value="GHMP Kinase, C-terminal domain"/>
    <property type="match status" value="1"/>
</dbReference>
<dbReference type="SUPFAM" id="SSF54211">
    <property type="entry name" value="Ribosomal protein S5 domain 2-like"/>
    <property type="match status" value="1"/>
</dbReference>
<comment type="function">
    <text evidence="1">Catalyzes the phosphorylation of the position 2 hydroxy group of 4-diphosphocytidyl-2C-methyl-D-erythritol.</text>
</comment>
<comment type="catalytic activity">
    <reaction evidence="1">
        <text>4-CDP-2-C-methyl-D-erythritol + ATP = 4-CDP-2-C-methyl-D-erythritol 2-phosphate + ADP + H(+)</text>
        <dbReference type="Rhea" id="RHEA:18437"/>
        <dbReference type="ChEBI" id="CHEBI:15378"/>
        <dbReference type="ChEBI" id="CHEBI:30616"/>
        <dbReference type="ChEBI" id="CHEBI:57823"/>
        <dbReference type="ChEBI" id="CHEBI:57919"/>
        <dbReference type="ChEBI" id="CHEBI:456216"/>
        <dbReference type="EC" id="2.7.1.148"/>
    </reaction>
</comment>
<comment type="pathway">
    <text evidence="1">Isoprenoid biosynthesis; isopentenyl diphosphate biosynthesis via DXP pathway; isopentenyl diphosphate from 1-deoxy-D-xylulose 5-phosphate: step 3/6.</text>
</comment>
<comment type="similarity">
    <text evidence="1">Belongs to the GHMP kinase family. IspE subfamily.</text>
</comment>
<reference key="1">
    <citation type="journal article" date="2010" name="ISME J.">
        <title>The complete genome sequence of the algal symbiont Dinoroseobacter shibae: a hitchhiker's guide to life in the sea.</title>
        <authorList>
            <person name="Wagner-Dobler I."/>
            <person name="Ballhausen B."/>
            <person name="Berger M."/>
            <person name="Brinkhoff T."/>
            <person name="Buchholz I."/>
            <person name="Bunk B."/>
            <person name="Cypionka H."/>
            <person name="Daniel R."/>
            <person name="Drepper T."/>
            <person name="Gerdts G."/>
            <person name="Hahnke S."/>
            <person name="Han C."/>
            <person name="Jahn D."/>
            <person name="Kalhoefer D."/>
            <person name="Kiss H."/>
            <person name="Klenk H.P."/>
            <person name="Kyrpides N."/>
            <person name="Liebl W."/>
            <person name="Liesegang H."/>
            <person name="Meincke L."/>
            <person name="Pati A."/>
            <person name="Petersen J."/>
            <person name="Piekarski T."/>
            <person name="Pommerenke C."/>
            <person name="Pradella S."/>
            <person name="Pukall R."/>
            <person name="Rabus R."/>
            <person name="Stackebrandt E."/>
            <person name="Thole S."/>
            <person name="Thompson L."/>
            <person name="Tielen P."/>
            <person name="Tomasch J."/>
            <person name="von Jan M."/>
            <person name="Wanphrut N."/>
            <person name="Wichels A."/>
            <person name="Zech H."/>
            <person name="Simon M."/>
        </authorList>
    </citation>
    <scope>NUCLEOTIDE SEQUENCE [LARGE SCALE GENOMIC DNA]</scope>
    <source>
        <strain>DSM 16493 / NCIMB 14021 / DFL 12</strain>
    </source>
</reference>
<sequence length="287" mass="29252">MSPPTEGRAPGSRPIAGFAPAKINLTLHVTGQRGDGYHLLDSLVVFADIGDRLVLDPDAALGLTVSGPRAAGVPTGPENLILKAAAHLGAVRGAIHLEKHLPAAAGIGGGSSDAATALRLHAQAMGRALPDDGAALGADVPVCLRGKATRMSGIGEALTPVAGLPPLPAVLVNPGVDVPTPAVFRGLRQKENPPMPADLPGFATPTDCARWLATQRNDLEPPARAAAPVIDSVLAEIAGDPDCLLARMSGSGATCFGLFETPAQAQAAAETLSTRHPDWWVAPTVLR</sequence>
<name>ISPE_DINSH</name>
<organism>
    <name type="scientific">Dinoroseobacter shibae (strain DSM 16493 / NCIMB 14021 / DFL 12)</name>
    <dbReference type="NCBI Taxonomy" id="398580"/>
    <lineage>
        <taxon>Bacteria</taxon>
        <taxon>Pseudomonadati</taxon>
        <taxon>Pseudomonadota</taxon>
        <taxon>Alphaproteobacteria</taxon>
        <taxon>Rhodobacterales</taxon>
        <taxon>Roseobacteraceae</taxon>
        <taxon>Dinoroseobacter</taxon>
    </lineage>
</organism>
<gene>
    <name evidence="1" type="primary">ispE</name>
    <name type="ordered locus">Dshi_3073</name>
</gene>
<evidence type="ECO:0000255" key="1">
    <source>
        <dbReference type="HAMAP-Rule" id="MF_00061"/>
    </source>
</evidence>
<keyword id="KW-0067">ATP-binding</keyword>
<keyword id="KW-0414">Isoprene biosynthesis</keyword>
<keyword id="KW-0418">Kinase</keyword>
<keyword id="KW-0547">Nucleotide-binding</keyword>
<keyword id="KW-1185">Reference proteome</keyword>
<keyword id="KW-0808">Transferase</keyword>